<organism>
    <name type="scientific">Ehrlichia ruminantium (strain Welgevonden)</name>
    <dbReference type="NCBI Taxonomy" id="254945"/>
    <lineage>
        <taxon>Bacteria</taxon>
        <taxon>Pseudomonadati</taxon>
        <taxon>Pseudomonadota</taxon>
        <taxon>Alphaproteobacteria</taxon>
        <taxon>Rickettsiales</taxon>
        <taxon>Anaplasmataceae</taxon>
        <taxon>Ehrlichia</taxon>
    </lineage>
</organism>
<accession>Q5HAG4</accession>
<accession>Q5FDK1</accession>
<comment type="similarity">
    <text evidence="1">Belongs to the DNA glycosylase MPG family.</text>
</comment>
<feature type="chain" id="PRO_0000265019" description="Putative 3-methyladenine DNA glycosylase">
    <location>
        <begin position="1"/>
        <end position="188"/>
    </location>
</feature>
<evidence type="ECO:0000255" key="1">
    <source>
        <dbReference type="HAMAP-Rule" id="MF_00527"/>
    </source>
</evidence>
<dbReference type="EC" id="3.2.2.-" evidence="1"/>
<dbReference type="EMBL" id="CR767821">
    <property type="protein sequence ID" value="CAH58449.1"/>
    <property type="molecule type" value="Genomic_DNA"/>
</dbReference>
<dbReference type="EMBL" id="CR925678">
    <property type="protein sequence ID" value="CAI27248.1"/>
    <property type="molecule type" value="Genomic_DNA"/>
</dbReference>
<dbReference type="RefSeq" id="WP_011155396.1">
    <property type="nucleotide sequence ID" value="NC_005295.2"/>
</dbReference>
<dbReference type="SMR" id="Q5HAG4"/>
<dbReference type="GeneID" id="33057558"/>
<dbReference type="KEGG" id="eru:Erum7170"/>
<dbReference type="KEGG" id="erw:ERWE_CDS_07540"/>
<dbReference type="eggNOG" id="COG2094">
    <property type="taxonomic scope" value="Bacteria"/>
</dbReference>
<dbReference type="HOGENOM" id="CLU_060471_4_1_5"/>
<dbReference type="Proteomes" id="UP000001021">
    <property type="component" value="Chromosome"/>
</dbReference>
<dbReference type="GO" id="GO:0003905">
    <property type="term" value="F:alkylbase DNA N-glycosylase activity"/>
    <property type="evidence" value="ECO:0007669"/>
    <property type="project" value="InterPro"/>
</dbReference>
<dbReference type="GO" id="GO:0003677">
    <property type="term" value="F:DNA binding"/>
    <property type="evidence" value="ECO:0007669"/>
    <property type="project" value="InterPro"/>
</dbReference>
<dbReference type="GO" id="GO:0006284">
    <property type="term" value="P:base-excision repair"/>
    <property type="evidence" value="ECO:0007669"/>
    <property type="project" value="InterPro"/>
</dbReference>
<dbReference type="CDD" id="cd00540">
    <property type="entry name" value="AAG"/>
    <property type="match status" value="1"/>
</dbReference>
<dbReference type="Gene3D" id="3.10.300.10">
    <property type="entry name" value="Methylpurine-DNA glycosylase (MPG)"/>
    <property type="match status" value="1"/>
</dbReference>
<dbReference type="HAMAP" id="MF_00527">
    <property type="entry name" value="3MGH"/>
    <property type="match status" value="1"/>
</dbReference>
<dbReference type="InterPro" id="IPR011034">
    <property type="entry name" value="Formyl_transferase-like_C_sf"/>
</dbReference>
<dbReference type="InterPro" id="IPR003180">
    <property type="entry name" value="MPG"/>
</dbReference>
<dbReference type="InterPro" id="IPR036995">
    <property type="entry name" value="MPG_sf"/>
</dbReference>
<dbReference type="NCBIfam" id="TIGR00567">
    <property type="entry name" value="3mg"/>
    <property type="match status" value="1"/>
</dbReference>
<dbReference type="NCBIfam" id="NF002004">
    <property type="entry name" value="PRK00802.1-4"/>
    <property type="match status" value="1"/>
</dbReference>
<dbReference type="PANTHER" id="PTHR10429">
    <property type="entry name" value="DNA-3-METHYLADENINE GLYCOSYLASE"/>
    <property type="match status" value="1"/>
</dbReference>
<dbReference type="PANTHER" id="PTHR10429:SF0">
    <property type="entry name" value="DNA-3-METHYLADENINE GLYCOSYLASE"/>
    <property type="match status" value="1"/>
</dbReference>
<dbReference type="Pfam" id="PF02245">
    <property type="entry name" value="Pur_DNA_glyco"/>
    <property type="match status" value="1"/>
</dbReference>
<dbReference type="SUPFAM" id="SSF50486">
    <property type="entry name" value="FMT C-terminal domain-like"/>
    <property type="match status" value="1"/>
</dbReference>
<sequence length="188" mass="21233">MYNILKKSFYKQKSLDVASSLLGKMLLFNQHKGIITETEAYIGQDDQAAHSFHGYTKRTAVMFGNPGFSYVYLIYGMYHCLNVVTEPEGFPAAILIRSIILLSKNTPHTKVNGPGKICKILDITKEHNNIDMTANHSFCICDTNLNIDDYICTPRIGISKATDKFWRFVIPDVTSLQYIDTKLVPTLT</sequence>
<name>3MGH_EHRRW</name>
<gene>
    <name type="ordered locus">Erum7170</name>
    <name type="ordered locus">ERWE_CDS_07540</name>
</gene>
<proteinExistence type="inferred from homology"/>
<protein>
    <recommendedName>
        <fullName evidence="1">Putative 3-methyladenine DNA glycosylase</fullName>
        <ecNumber evidence="1">3.2.2.-</ecNumber>
    </recommendedName>
</protein>
<reference key="1">
    <citation type="journal article" date="2005" name="Proc. Natl. Acad. Sci. U.S.A.">
        <title>The genome of the heartwater agent Ehrlichia ruminantium contains multiple tandem repeats of actively variable copy number.</title>
        <authorList>
            <person name="Collins N.E."/>
            <person name="Liebenberg J."/>
            <person name="de Villiers E.P."/>
            <person name="Brayton K.A."/>
            <person name="Louw E."/>
            <person name="Pretorius A."/>
            <person name="Faber F.E."/>
            <person name="van Heerden H."/>
            <person name="Josemans A."/>
            <person name="van Kleef M."/>
            <person name="Steyn H.C."/>
            <person name="van Strijp M.F."/>
            <person name="Zweygarth E."/>
            <person name="Jongejan F."/>
            <person name="Maillard J.C."/>
            <person name="Berthier D."/>
            <person name="Botha M."/>
            <person name="Joubert F."/>
            <person name="Corton C.H."/>
            <person name="Thomson N.R."/>
            <person name="Allsopp M.T."/>
            <person name="Allsopp B.A."/>
        </authorList>
    </citation>
    <scope>NUCLEOTIDE SEQUENCE [LARGE SCALE GENOMIC DNA]</scope>
    <source>
        <strain>Welgevonden</strain>
    </source>
</reference>
<reference key="2">
    <citation type="journal article" date="2006" name="J. Bacteriol.">
        <title>Comparative genomic analysis of three strains of Ehrlichia ruminantium reveals an active process of genome size plasticity.</title>
        <authorList>
            <person name="Frutos R."/>
            <person name="Viari A."/>
            <person name="Ferraz C."/>
            <person name="Morgat A."/>
            <person name="Eychenie S."/>
            <person name="Kandassamy Y."/>
            <person name="Chantal I."/>
            <person name="Bensaid A."/>
            <person name="Coissac E."/>
            <person name="Vachiery N."/>
            <person name="Demaille J."/>
            <person name="Martinez D."/>
        </authorList>
    </citation>
    <scope>NUCLEOTIDE SEQUENCE [LARGE SCALE GENOMIC DNA]</scope>
    <source>
        <strain>Welgevonden</strain>
    </source>
</reference>
<keyword id="KW-0227">DNA damage</keyword>
<keyword id="KW-0234">DNA repair</keyword>
<keyword id="KW-0378">Hydrolase</keyword>